<feature type="chain" id="PRO_0000185393" description="Protein SGT1">
    <location>
        <begin position="1"/>
        <end position="395"/>
    </location>
</feature>
<feature type="domain" description="CS" evidence="2">
    <location>
        <begin position="182"/>
        <end position="277"/>
    </location>
</feature>
<feature type="domain" description="SGS" evidence="1">
    <location>
        <begin position="312"/>
        <end position="395"/>
    </location>
</feature>
<feature type="region of interest" description="Disordered" evidence="3">
    <location>
        <begin position="137"/>
        <end position="175"/>
    </location>
</feature>
<feature type="region of interest" description="Disordered" evidence="3">
    <location>
        <begin position="373"/>
        <end position="395"/>
    </location>
</feature>
<feature type="modified residue" description="Phosphoserine" evidence="11 12 13">
    <location>
        <position position="168"/>
    </location>
</feature>
<feature type="modified residue" description="Phosphoserine" evidence="11 12 13">
    <location>
        <position position="171"/>
    </location>
</feature>
<feature type="cross-link" description="Glycyl lysine isopeptide (Lys-Gly) (interchain with G-Cter in ubiquitin)" evidence="14">
    <location>
        <position position="32"/>
    </location>
</feature>
<feature type="mutagenesis site" description="In sgt1-3; induces arrest of cell division in G2/M; when associated with L-99 and I-213.">
    <original>L</original>
    <variation>P</variation>
    <location>
        <position position="31"/>
    </location>
</feature>
<feature type="mutagenesis site" description="In sgt1-3; induces arrest of cell division in G2/M; when associated with P-31 I-213.">
    <original>F</original>
    <variation>L</variation>
    <location>
        <position position="99"/>
    </location>
</feature>
<feature type="mutagenesis site" description="In sgt1-3; induces arrest of cell division in G2/M; when associated with P-31 and L-99.">
    <original>N</original>
    <variation>I</variation>
    <location>
        <position position="213"/>
    </location>
</feature>
<feature type="mutagenesis site" description="In sgt1-5; induces arrest of cell division in G2/M; when associated with K-364.">
    <original>D</original>
    <variation>V</variation>
    <location>
        <position position="220"/>
    </location>
</feature>
<feature type="mutagenesis site" description="In sgt1-5; induces arrest of cell division in G2/M; when associated with V-220.">
    <original>E</original>
    <variation>K</variation>
    <location>
        <position position="364"/>
    </location>
</feature>
<feature type="mutagenesis site" description="In A364a; suppressor of the cdc35-1 allele.">
    <original>S</original>
    <variation>N</variation>
    <location>
        <position position="371"/>
    </location>
</feature>
<feature type="sequence conflict" description="In Ref. 4; AAS56369." evidence="9" ref="4">
    <original>A</original>
    <variation>T</variation>
    <location>
        <position position="13"/>
    </location>
</feature>
<feature type="helix" evidence="15">
    <location>
        <begin position="4"/>
        <end position="15"/>
    </location>
</feature>
<feature type="helix" evidence="15">
    <location>
        <begin position="20"/>
        <end position="33"/>
    </location>
</feature>
<feature type="helix" evidence="15">
    <location>
        <begin position="38"/>
        <end position="52"/>
    </location>
</feature>
<feature type="helix" evidence="15">
    <location>
        <begin position="56"/>
        <end position="58"/>
    </location>
</feature>
<feature type="helix" evidence="15">
    <location>
        <begin position="61"/>
        <end position="79"/>
    </location>
</feature>
<feature type="helix" evidence="15">
    <location>
        <begin position="84"/>
        <end position="100"/>
    </location>
</feature>
<feature type="helix" evidence="15">
    <location>
        <begin position="104"/>
        <end position="116"/>
    </location>
</feature>
<feature type="helix" evidence="15">
    <location>
        <begin position="124"/>
        <end position="133"/>
    </location>
</feature>
<organism>
    <name type="scientific">Saccharomyces cerevisiae (strain ATCC 204508 / S288c)</name>
    <name type="common">Baker's yeast</name>
    <dbReference type="NCBI Taxonomy" id="559292"/>
    <lineage>
        <taxon>Eukaryota</taxon>
        <taxon>Fungi</taxon>
        <taxon>Dikarya</taxon>
        <taxon>Ascomycota</taxon>
        <taxon>Saccharomycotina</taxon>
        <taxon>Saccharomycetes</taxon>
        <taxon>Saccharomycetales</taxon>
        <taxon>Saccharomycetaceae</taxon>
        <taxon>Saccharomyces</taxon>
    </lineage>
</organism>
<accession>Q08446</accession>
<accession>D6W2C0</accession>
<accession>E9P8U7</accession>
<evidence type="ECO:0000255" key="1">
    <source>
        <dbReference type="PROSITE-ProRule" id="PRU00386"/>
    </source>
</evidence>
<evidence type="ECO:0000255" key="2">
    <source>
        <dbReference type="PROSITE-ProRule" id="PRU00547"/>
    </source>
</evidence>
<evidence type="ECO:0000256" key="3">
    <source>
        <dbReference type="SAM" id="MobiDB-lite"/>
    </source>
</evidence>
<evidence type="ECO:0000269" key="4">
    <source>
    </source>
</evidence>
<evidence type="ECO:0000269" key="5">
    <source>
    </source>
</evidence>
<evidence type="ECO:0000269" key="6">
    <source>
    </source>
</evidence>
<evidence type="ECO:0000303" key="7">
    <source>
    </source>
</evidence>
<evidence type="ECO:0000303" key="8">
    <source>
    </source>
</evidence>
<evidence type="ECO:0000305" key="9"/>
<evidence type="ECO:0000312" key="10">
    <source>
        <dbReference type="SGD" id="S000005583"/>
    </source>
</evidence>
<evidence type="ECO:0007744" key="11">
    <source>
    </source>
</evidence>
<evidence type="ECO:0007744" key="12">
    <source>
    </source>
</evidence>
<evidence type="ECO:0007744" key="13">
    <source>
    </source>
</evidence>
<evidence type="ECO:0007744" key="14">
    <source>
    </source>
</evidence>
<evidence type="ECO:0007829" key="15">
    <source>
        <dbReference type="PDB" id="5AN3"/>
    </source>
</evidence>
<comment type="function">
    <text evidence="4 5">Involved in ubiquitination and subsequent proteasomal degradation of target proteins. Required for both entry into S phase and kinetochore function. Also involved in cyclic AMP (cAMP) pathway, possibly by participating in the assembly or the conformational activation of specific multiprotein complexes.</text>
</comment>
<comment type="subunit">
    <text evidence="4 5">Interacts with SKP1/CBF3D. Part of SCF E3 ubiquitin ligase complexes containing SKP1, CDC53, HRT1 and some F-box proteins. Interacts with CIR1/CDC35.</text>
</comment>
<comment type="interaction">
    <interactant intactId="EBI-17070">
        <id>Q08446</id>
    </interactant>
    <interactant intactId="EBI-4085">
        <id>P35203</id>
        <label>CTF13</label>
    </interactant>
    <organismsDiffer>false</organismsDiffer>
    <experiments>3</experiments>
</comment>
<comment type="interaction">
    <interactant intactId="EBI-17070">
        <id>Q08446</id>
    </interactant>
    <interactant intactId="EBI-8659">
        <id>P02829</id>
        <label>HSP82</label>
    </interactant>
    <organismsDiffer>false</organismsDiffer>
    <experiments>2</experiments>
</comment>
<comment type="interaction">
    <interactant intactId="EBI-17070">
        <id>Q08446</id>
    </interactant>
    <interactant intactId="EBI-4090">
        <id>P52286</id>
        <label>SKP1</label>
    </interactant>
    <organismsDiffer>false</organismsDiffer>
    <experiments>8</experiments>
</comment>
<comment type="miscellaneous">
    <text evidence="6">Present with 1340 molecules/cell in log phase SD medium.</text>
</comment>
<comment type="similarity">
    <text evidence="9">Belongs to the SGT1 family.</text>
</comment>
<sequence>MPVEKDLKTAYKALYDEKEPLKALHLYDEILKGSPTNLTALIFKAACLEKLYFGFSDWHSDATMENAKELLDKALMTAEGRGDRSKIGLVNFRYFVHFFNIKDYELAQSYFKKAKNLGYVDDTLPLWEDRLETKLNKKNKKQKDSTNKHTIKPVESIENRGDNNSSHSPISPLKIETAPQESPKFKIDWYQSSTSVTISLFTVNLPESKEQVNIYISPNDRRTLSISYQVPKSGSEFQYNAKLSHEVDPKAVSLKIFPKKLEITLSKIDSTQWKKLEEDILTESSRLSDEGKNSDSATRLLSAETASKERLSYPSSSKKKIDWSKLDIDEEADEEAGSADSFFQKLYAGADPDTKRAMMKSFIESNGTALSTDWEDVSKGTVKTSPPEGMEPKHW</sequence>
<keyword id="KW-0002">3D-structure</keyword>
<keyword id="KW-0131">Cell cycle</keyword>
<keyword id="KW-1017">Isopeptide bond</keyword>
<keyword id="KW-0597">Phosphoprotein</keyword>
<keyword id="KW-1185">Reference proteome</keyword>
<keyword id="KW-0832">Ubl conjugation</keyword>
<keyword id="KW-0833">Ubl conjugation pathway</keyword>
<reference key="1">
    <citation type="journal article" date="1997" name="Yeast">
        <title>The sequence of a 54.7 kb fragment of yeast chromosome XV reveals the presence of two tRNAs and 24 new open reading frames.</title>
        <authorList>
            <person name="Valens M."/>
            <person name="Bohn C."/>
            <person name="Daignan-Fornier B."/>
            <person name="Dang V.-D."/>
            <person name="Bolotin-Fukuhara M."/>
        </authorList>
    </citation>
    <scope>NUCLEOTIDE SEQUENCE [GENOMIC DNA]</scope>
</reference>
<reference key="2">
    <citation type="journal article" date="1997" name="Nature">
        <title>The nucleotide sequence of Saccharomyces cerevisiae chromosome XV.</title>
        <authorList>
            <person name="Dujon B."/>
            <person name="Albermann K."/>
            <person name="Aldea M."/>
            <person name="Alexandraki D."/>
            <person name="Ansorge W."/>
            <person name="Arino J."/>
            <person name="Benes V."/>
            <person name="Bohn C."/>
            <person name="Bolotin-Fukuhara M."/>
            <person name="Bordonne R."/>
            <person name="Boyer J."/>
            <person name="Camasses A."/>
            <person name="Casamayor A."/>
            <person name="Casas C."/>
            <person name="Cheret G."/>
            <person name="Cziepluch C."/>
            <person name="Daignan-Fornier B."/>
            <person name="Dang V.-D."/>
            <person name="de Haan M."/>
            <person name="Delius H."/>
            <person name="Durand P."/>
            <person name="Fairhead C."/>
            <person name="Feldmann H."/>
            <person name="Gaillon L."/>
            <person name="Galisson F."/>
            <person name="Gamo F.-J."/>
            <person name="Gancedo C."/>
            <person name="Goffeau A."/>
            <person name="Goulding S.E."/>
            <person name="Grivell L.A."/>
            <person name="Habbig B."/>
            <person name="Hand N.J."/>
            <person name="Hani J."/>
            <person name="Hattenhorst U."/>
            <person name="Hebling U."/>
            <person name="Hernando Y."/>
            <person name="Herrero E."/>
            <person name="Heumann K."/>
            <person name="Hiesel R."/>
            <person name="Hilger F."/>
            <person name="Hofmann B."/>
            <person name="Hollenberg C.P."/>
            <person name="Hughes B."/>
            <person name="Jauniaux J.-C."/>
            <person name="Kalogeropoulos A."/>
            <person name="Katsoulou C."/>
            <person name="Kordes E."/>
            <person name="Lafuente M.J."/>
            <person name="Landt O."/>
            <person name="Louis E.J."/>
            <person name="Maarse A.C."/>
            <person name="Madania A."/>
            <person name="Mannhaupt G."/>
            <person name="Marck C."/>
            <person name="Martin R.P."/>
            <person name="Mewes H.-W."/>
            <person name="Michaux G."/>
            <person name="Paces V."/>
            <person name="Parle-McDermott A.G."/>
            <person name="Pearson B.M."/>
            <person name="Perrin A."/>
            <person name="Pettersson B."/>
            <person name="Poch O."/>
            <person name="Pohl T.M."/>
            <person name="Poirey R."/>
            <person name="Portetelle D."/>
            <person name="Pujol A."/>
            <person name="Purnelle B."/>
            <person name="Ramezani Rad M."/>
            <person name="Rechmann S."/>
            <person name="Schwager C."/>
            <person name="Schweizer M."/>
            <person name="Sor F."/>
            <person name="Sterky F."/>
            <person name="Tarassov I.A."/>
            <person name="Teodoru C."/>
            <person name="Tettelin H."/>
            <person name="Thierry A."/>
            <person name="Tobiasch E."/>
            <person name="Tzermia M."/>
            <person name="Uhlen M."/>
            <person name="Unseld M."/>
            <person name="Valens M."/>
            <person name="Vandenbol M."/>
            <person name="Vetter I."/>
            <person name="Vlcek C."/>
            <person name="Voet M."/>
            <person name="Volckaert G."/>
            <person name="Voss H."/>
            <person name="Wambutt R."/>
            <person name="Wedler H."/>
            <person name="Wiemann S."/>
            <person name="Winsor B."/>
            <person name="Wolfe K.H."/>
            <person name="Zollner A."/>
            <person name="Zumstein E."/>
            <person name="Kleine K."/>
        </authorList>
    </citation>
    <scope>NUCLEOTIDE SEQUENCE [LARGE SCALE GENOMIC DNA]</scope>
    <source>
        <strain>ATCC 204508 / S288c</strain>
    </source>
</reference>
<reference key="3">
    <citation type="journal article" date="2014" name="G3 (Bethesda)">
        <title>The reference genome sequence of Saccharomyces cerevisiae: Then and now.</title>
        <authorList>
            <person name="Engel S.R."/>
            <person name="Dietrich F.S."/>
            <person name="Fisk D.G."/>
            <person name="Binkley G."/>
            <person name="Balakrishnan R."/>
            <person name="Costanzo M.C."/>
            <person name="Dwight S.S."/>
            <person name="Hitz B.C."/>
            <person name="Karra K."/>
            <person name="Nash R.S."/>
            <person name="Weng S."/>
            <person name="Wong E.D."/>
            <person name="Lloyd P."/>
            <person name="Skrzypek M.S."/>
            <person name="Miyasato S.R."/>
            <person name="Simison M."/>
            <person name="Cherry J.M."/>
        </authorList>
    </citation>
    <scope>GENOME REANNOTATION</scope>
    <source>
        <strain>ATCC 204508 / S288c</strain>
    </source>
</reference>
<reference key="4">
    <citation type="journal article" date="2007" name="Genome Res.">
        <title>Approaching a complete repository of sequence-verified protein-encoding clones for Saccharomyces cerevisiae.</title>
        <authorList>
            <person name="Hu Y."/>
            <person name="Rolfs A."/>
            <person name="Bhullar B."/>
            <person name="Murthy T.V.S."/>
            <person name="Zhu C."/>
            <person name="Berger M.F."/>
            <person name="Camargo A.A."/>
            <person name="Kelley F."/>
            <person name="McCarron S."/>
            <person name="Jepson D."/>
            <person name="Richardson A."/>
            <person name="Raphael J."/>
            <person name="Moreira D."/>
            <person name="Taycher E."/>
            <person name="Zuo D."/>
            <person name="Mohr S."/>
            <person name="Kane M.F."/>
            <person name="Williamson J."/>
            <person name="Simpson A.J.G."/>
            <person name="Bulyk M.L."/>
            <person name="Harlow E."/>
            <person name="Marsischky G."/>
            <person name="Kolodner R.D."/>
            <person name="LaBaer J."/>
        </authorList>
    </citation>
    <scope>NUCLEOTIDE SEQUENCE [GENOMIC DNA]</scope>
    <source>
        <strain>ATCC 204508 / S288c</strain>
    </source>
</reference>
<reference key="5">
    <citation type="journal article" date="1999" name="Mol. Cell">
        <title>SGT1 encodes an essential component of the yeast kinetochore assembly pathway and a novel subunit of the SCF ubiquitin ligase complex.</title>
        <authorList>
            <person name="Kitagawa K."/>
            <person name="Skowyra D."/>
            <person name="Elledge S.J."/>
            <person name="Harper J.W."/>
            <person name="Hieter P."/>
        </authorList>
    </citation>
    <scope>FUNCTION</scope>
    <scope>INTERACTION WITH SKP1</scope>
    <scope>INTERACTION WITH THE SCF COMPLEX</scope>
    <scope>MUTANTS SGT1-3 AND SGT1-5</scope>
</reference>
<reference key="6">
    <citation type="journal article" date="2002" name="Eukaryot. Cell">
        <title>Sgt1p contributes to cyclic AMP pathway activity and physically interacts with the adenylyl cyclase Cyr1p/Cdc35p in budding yeast.</title>
        <authorList>
            <person name="Dubacq C."/>
            <person name="Guerois R."/>
            <person name="Courbeyrette R."/>
            <person name="Kitagawa K."/>
            <person name="Mann C."/>
        </authorList>
    </citation>
    <scope>FUNCTION</scope>
    <scope>INTERACTION WITH CIR1</scope>
    <scope>MUTANT A364A</scope>
</reference>
<reference key="7">
    <citation type="journal article" date="2003" name="Nature">
        <title>Global analysis of protein expression in yeast.</title>
        <authorList>
            <person name="Ghaemmaghami S."/>
            <person name="Huh W.-K."/>
            <person name="Bower K."/>
            <person name="Howson R.W."/>
            <person name="Belle A."/>
            <person name="Dephoure N."/>
            <person name="O'Shea E.K."/>
            <person name="Weissman J.S."/>
        </authorList>
    </citation>
    <scope>LEVEL OF PROTEIN EXPRESSION [LARGE SCALE ANALYSIS]</scope>
</reference>
<reference key="8">
    <citation type="journal article" date="2007" name="J. Proteome Res.">
        <title>Large-scale phosphorylation analysis of alpha-factor-arrested Saccharomyces cerevisiae.</title>
        <authorList>
            <person name="Li X."/>
            <person name="Gerber S.A."/>
            <person name="Rudner A.D."/>
            <person name="Beausoleil S.A."/>
            <person name="Haas W."/>
            <person name="Villen J."/>
            <person name="Elias J.E."/>
            <person name="Gygi S.P."/>
        </authorList>
    </citation>
    <scope>PHOSPHORYLATION [LARGE SCALE ANALYSIS] AT SER-168 AND SER-171</scope>
    <scope>IDENTIFICATION BY MASS SPECTROMETRY [LARGE SCALE ANALYSIS]</scope>
    <source>
        <strain>ADR376</strain>
    </source>
</reference>
<reference key="9">
    <citation type="journal article" date="2008" name="Mol. Cell. Proteomics">
        <title>A multidimensional chromatography technology for in-depth phosphoproteome analysis.</title>
        <authorList>
            <person name="Albuquerque C.P."/>
            <person name="Smolka M.B."/>
            <person name="Payne S.H."/>
            <person name="Bafna V."/>
            <person name="Eng J."/>
            <person name="Zhou H."/>
        </authorList>
    </citation>
    <scope>PHOSPHORYLATION [LARGE SCALE ANALYSIS] AT SER-168 AND SER-171</scope>
    <scope>IDENTIFICATION BY MASS SPECTROMETRY [LARGE SCALE ANALYSIS]</scope>
</reference>
<reference key="10">
    <citation type="journal article" date="2009" name="Science">
        <title>Global analysis of Cdk1 substrate phosphorylation sites provides insights into evolution.</title>
        <authorList>
            <person name="Holt L.J."/>
            <person name="Tuch B.B."/>
            <person name="Villen J."/>
            <person name="Johnson A.D."/>
            <person name="Gygi S.P."/>
            <person name="Morgan D.O."/>
        </authorList>
    </citation>
    <scope>PHOSPHORYLATION [LARGE SCALE ANALYSIS] AT SER-168 AND SER-171</scope>
    <scope>IDENTIFICATION BY MASS SPECTROMETRY [LARGE SCALE ANALYSIS]</scope>
</reference>
<reference key="11">
    <citation type="journal article" date="2012" name="Proteomics">
        <title>Sites of ubiquitin attachment in Saccharomyces cerevisiae.</title>
        <authorList>
            <person name="Starita L.M."/>
            <person name="Lo R.S."/>
            <person name="Eng J.K."/>
            <person name="von Haller P.D."/>
            <person name="Fields S."/>
        </authorList>
    </citation>
    <scope>UBIQUITINATION [LARGE SCALE ANALYSIS] AT LYS-32</scope>
    <scope>IDENTIFICATION BY MASS SPECTROMETRY [LARGE SCALE ANALYSIS]</scope>
</reference>
<name>SGT1_YEAST</name>
<proteinExistence type="evidence at protein level"/>
<gene>
    <name evidence="10" type="primary">SGT1</name>
    <name type="ordered locus">YOR057W</name>
    <name type="ORF">YOR29-08</name>
</gene>
<protein>
    <recommendedName>
        <fullName evidence="7 8">Protein SGT1</fullName>
    </recommendedName>
    <alternativeName>
        <fullName evidence="7">Suppressor of G2 allele of SKP1</fullName>
    </alternativeName>
</protein>
<dbReference type="EMBL" id="U88830">
    <property type="protein sequence ID" value="AAB48841.1"/>
    <property type="molecule type" value="Genomic_DNA"/>
</dbReference>
<dbReference type="EMBL" id="Z70678">
    <property type="protein sequence ID" value="CAA94542.1"/>
    <property type="molecule type" value="Genomic_DNA"/>
</dbReference>
<dbReference type="EMBL" id="Z74965">
    <property type="protein sequence ID" value="CAA99250.1"/>
    <property type="molecule type" value="Genomic_DNA"/>
</dbReference>
<dbReference type="EMBL" id="AY558043">
    <property type="protein sequence ID" value="AAS56369.1"/>
    <property type="molecule type" value="Genomic_DNA"/>
</dbReference>
<dbReference type="EMBL" id="BK006948">
    <property type="protein sequence ID" value="DAA10836.1"/>
    <property type="molecule type" value="Genomic_DNA"/>
</dbReference>
<dbReference type="PIR" id="S66940">
    <property type="entry name" value="S66940"/>
</dbReference>
<dbReference type="RefSeq" id="NP_014700.1">
    <property type="nucleotide sequence ID" value="NM_001183476.1"/>
</dbReference>
<dbReference type="PDB" id="5AN3">
    <property type="method" value="X-ray"/>
    <property type="resolution" value="2.82 A"/>
    <property type="chains" value="A/B/C=1-150"/>
</dbReference>
<dbReference type="PDBsum" id="5AN3"/>
<dbReference type="SMR" id="Q08446"/>
<dbReference type="BioGRID" id="34455">
    <property type="interactions" value="684"/>
</dbReference>
<dbReference type="DIP" id="DIP-1628N"/>
<dbReference type="FunCoup" id="Q08446">
    <property type="interactions" value="1212"/>
</dbReference>
<dbReference type="IntAct" id="Q08446">
    <property type="interactions" value="12"/>
</dbReference>
<dbReference type="MINT" id="Q08446"/>
<dbReference type="STRING" id="4932.YOR057W"/>
<dbReference type="GlyGen" id="Q08446">
    <property type="glycosylation" value="4 sites, 1 O-linked glycan (4 sites)"/>
</dbReference>
<dbReference type="iPTMnet" id="Q08446"/>
<dbReference type="PaxDb" id="4932-YOR057W"/>
<dbReference type="PeptideAtlas" id="Q08446"/>
<dbReference type="EnsemblFungi" id="YOR057W_mRNA">
    <property type="protein sequence ID" value="YOR057W"/>
    <property type="gene ID" value="YOR057W"/>
</dbReference>
<dbReference type="GeneID" id="854222"/>
<dbReference type="KEGG" id="sce:YOR057W"/>
<dbReference type="AGR" id="SGD:S000005583"/>
<dbReference type="SGD" id="S000005583">
    <property type="gene designation" value="SGT1"/>
</dbReference>
<dbReference type="VEuPathDB" id="FungiDB:YOR057W"/>
<dbReference type="eggNOG" id="KOG1309">
    <property type="taxonomic scope" value="Eukaryota"/>
</dbReference>
<dbReference type="GeneTree" id="ENSGT00940000173366"/>
<dbReference type="HOGENOM" id="CLU_039532_3_0_1"/>
<dbReference type="InParanoid" id="Q08446"/>
<dbReference type="OMA" id="KIREDWY"/>
<dbReference type="OrthoDB" id="1898560at2759"/>
<dbReference type="BioCyc" id="YEAST:G3O-33597-MONOMER"/>
<dbReference type="Reactome" id="R-SCE-844456">
    <property type="pathway name" value="The NLRP3 inflammasome"/>
</dbReference>
<dbReference type="BioGRID-ORCS" id="854222">
    <property type="hits" value="4 hits in 10 CRISPR screens"/>
</dbReference>
<dbReference type="PRO" id="PR:Q08446"/>
<dbReference type="Proteomes" id="UP000002311">
    <property type="component" value="Chromosome XV"/>
</dbReference>
<dbReference type="RNAct" id="Q08446">
    <property type="molecule type" value="protein"/>
</dbReference>
<dbReference type="GO" id="GO:0005829">
    <property type="term" value="C:cytosol"/>
    <property type="evidence" value="ECO:0000314"/>
    <property type="project" value="SGD"/>
</dbReference>
<dbReference type="GO" id="GO:0005783">
    <property type="term" value="C:endoplasmic reticulum"/>
    <property type="evidence" value="ECO:0000314"/>
    <property type="project" value="SGD"/>
</dbReference>
<dbReference type="GO" id="GO:0000151">
    <property type="term" value="C:ubiquitin ligase complex"/>
    <property type="evidence" value="ECO:0000314"/>
    <property type="project" value="SGD"/>
</dbReference>
<dbReference type="GO" id="GO:0051087">
    <property type="term" value="F:protein-folding chaperone binding"/>
    <property type="evidence" value="ECO:0000314"/>
    <property type="project" value="SGD"/>
</dbReference>
<dbReference type="GO" id="GO:0030674">
    <property type="term" value="F:protein-macromolecule adaptor activity"/>
    <property type="evidence" value="ECO:0000314"/>
    <property type="project" value="SGD"/>
</dbReference>
<dbReference type="GO" id="GO:0051382">
    <property type="term" value="P:kinetochore assembly"/>
    <property type="evidence" value="ECO:0000314"/>
    <property type="project" value="SGD"/>
</dbReference>
<dbReference type="GO" id="GO:0006515">
    <property type="term" value="P:protein quality control for misfolded or incompletely synthesized proteins"/>
    <property type="evidence" value="ECO:0000314"/>
    <property type="project" value="SGD"/>
</dbReference>
<dbReference type="GO" id="GO:0065003">
    <property type="term" value="P:protein-containing complex assembly"/>
    <property type="evidence" value="ECO:0000314"/>
    <property type="project" value="SGD"/>
</dbReference>
<dbReference type="CDD" id="cd06466">
    <property type="entry name" value="p23_CS_SGT1_like"/>
    <property type="match status" value="1"/>
</dbReference>
<dbReference type="FunFam" id="1.25.40.10:FF:001719">
    <property type="entry name" value="Sgt1p"/>
    <property type="match status" value="1"/>
</dbReference>
<dbReference type="Gene3D" id="2.60.40.790">
    <property type="match status" value="1"/>
</dbReference>
<dbReference type="Gene3D" id="1.25.40.10">
    <property type="entry name" value="Tetratricopeptide repeat domain"/>
    <property type="match status" value="1"/>
</dbReference>
<dbReference type="InterPro" id="IPR007052">
    <property type="entry name" value="CS_dom"/>
</dbReference>
<dbReference type="InterPro" id="IPR008978">
    <property type="entry name" value="HSP20-like_chaperone"/>
</dbReference>
<dbReference type="InterPro" id="IPR007699">
    <property type="entry name" value="SGS_dom"/>
</dbReference>
<dbReference type="InterPro" id="IPR044563">
    <property type="entry name" value="Sgt1-like"/>
</dbReference>
<dbReference type="InterPro" id="IPR011990">
    <property type="entry name" value="TPR-like_helical_dom_sf"/>
</dbReference>
<dbReference type="PANTHER" id="PTHR45862">
    <property type="entry name" value="PROTEIN SGT1 HOMOLOG"/>
    <property type="match status" value="1"/>
</dbReference>
<dbReference type="Pfam" id="PF04969">
    <property type="entry name" value="CS"/>
    <property type="match status" value="1"/>
</dbReference>
<dbReference type="Pfam" id="PF05002">
    <property type="entry name" value="SGS"/>
    <property type="match status" value="1"/>
</dbReference>
<dbReference type="SUPFAM" id="SSF49764">
    <property type="entry name" value="HSP20-like chaperones"/>
    <property type="match status" value="1"/>
</dbReference>
<dbReference type="SUPFAM" id="SSF48452">
    <property type="entry name" value="TPR-like"/>
    <property type="match status" value="1"/>
</dbReference>
<dbReference type="PROSITE" id="PS51203">
    <property type="entry name" value="CS"/>
    <property type="match status" value="1"/>
</dbReference>
<dbReference type="PROSITE" id="PS51048">
    <property type="entry name" value="SGS"/>
    <property type="match status" value="1"/>
</dbReference>